<protein>
    <recommendedName>
        <fullName evidence="6">Iripin-8</fullName>
    </recommendedName>
    <alternativeName>
        <fullName evidence="5">I ricinus serpin-8</fullName>
        <shortName evidence="5">IRS-8</shortName>
    </alternativeName>
</protein>
<proteinExistence type="evidence at protein level"/>
<reference evidence="8" key="1">
    <citation type="journal article" date="2011" name="Blood">
        <title>A tick salivary protein targets cathepsin G and chymase and inhibits host inflammation and platelet aggregation.</title>
        <authorList>
            <person name="Chmelar J."/>
            <person name="Oliveira C.J."/>
            <person name="Rezacova P."/>
            <person name="Francischetti I.M."/>
            <person name="Kovarova Z."/>
            <person name="Pejler G."/>
            <person name="Kopacek P."/>
            <person name="Ribeiro J.M."/>
            <person name="Mares M."/>
            <person name="Kopecky J."/>
            <person name="Kotsyfakis M."/>
        </authorList>
    </citation>
    <scope>NUCLEOTIDE SEQUENCE [MRNA]</scope>
    <scope>TISSUE SPECIFICITY</scope>
    <source>
        <tissue evidence="8">Salivary gland</tissue>
    </source>
</reference>
<reference evidence="9" key="2">
    <citation type="submission" date="2012-12" db="EMBL/GenBank/DDBJ databases">
        <title>De novo Ixodes ricinus salivary transcriptome analysis using two different next generation sequencing methodologies.</title>
        <authorList>
            <person name="Schwarz A."/>
            <person name="von Reumont B.M."/>
            <person name="Erhart J."/>
            <person name="Chagas A.C."/>
            <person name="Ribeiro J.M.C."/>
            <person name="Kotsyfakis M."/>
        </authorList>
    </citation>
    <scope>NUCLEOTIDE SEQUENCE [LARGE SCALE MRNA]</scope>
    <source>
        <tissue evidence="9">Salivary gland</tissue>
    </source>
</reference>
<reference evidence="10" key="3">
    <citation type="journal article" date="2021" name="Int. J. Mol. Sci.">
        <title>Ixodes ricinus Salivary Serpin Iripin-8 Inhibits the Intrinsic Pathway of Coagulation and Complement.</title>
        <authorList>
            <person name="Kotal J."/>
            <person name="Polderdijk S.G.I."/>
            <person name="Langhansova H."/>
            <person name="Ederova M."/>
            <person name="Martins L.A."/>
            <person name="Berankova Z."/>
            <person name="Chlastakova A."/>
            <person name="Hajdusek O."/>
            <person name="Kotsyfakis M."/>
            <person name="Huntington J.A."/>
            <person name="Chmelar J."/>
        </authorList>
    </citation>
    <scope>X-RAY CRYSTALLOGRAPHY (1.89 ANGSTROMS) OF 17-402</scope>
    <scope>FUNCTION</scope>
    <scope>INTERACTION WITH HOST F2; F7; F10; F12; F9; PLG; PROC; KLKB1 AND PRSS1</scope>
    <scope>SUBCELLULAR LOCATION</scope>
    <scope>TISSUE SPECIFICITY</scope>
    <scope>DEVELOPMENTAL STAGE</scope>
    <scope>INDUCTION BY BLOOD FEEDING</scope>
    <scope>DOMAIN</scope>
    <scope>DISRUPTION PHENOTYPE</scope>
</reference>
<organism evidence="8">
    <name type="scientific">Ixodes ricinus</name>
    <name type="common">Common tick</name>
    <name type="synonym">Acarus ricinus</name>
    <dbReference type="NCBI Taxonomy" id="34613"/>
    <lineage>
        <taxon>Eukaryota</taxon>
        <taxon>Metazoa</taxon>
        <taxon>Ecdysozoa</taxon>
        <taxon>Arthropoda</taxon>
        <taxon>Chelicerata</taxon>
        <taxon>Arachnida</taxon>
        <taxon>Acari</taxon>
        <taxon>Parasitiformes</taxon>
        <taxon>Ixodida</taxon>
        <taxon>Ixodoidea</taxon>
        <taxon>Ixodidae</taxon>
        <taxon>Ixodinae</taxon>
        <taxon>Ixodes</taxon>
    </lineage>
</organism>
<dbReference type="EMBL" id="DQ915845">
    <property type="protein sequence ID" value="ABI94058.1"/>
    <property type="molecule type" value="mRNA"/>
</dbReference>
<dbReference type="EMBL" id="GADI01001260">
    <property type="protein sequence ID" value="JAA72548.1"/>
    <property type="status" value="ALT_INIT"/>
    <property type="molecule type" value="mRNA"/>
</dbReference>
<dbReference type="PDB" id="7PMU">
    <property type="method" value="X-ray"/>
    <property type="resolution" value="1.89 A"/>
    <property type="chains" value="A=17-402"/>
</dbReference>
<dbReference type="PDBsum" id="7PMU"/>
<dbReference type="SMR" id="Q06B72"/>
<dbReference type="MEROPS" id="I04.088"/>
<dbReference type="GO" id="GO:0005615">
    <property type="term" value="C:extracellular space"/>
    <property type="evidence" value="ECO:0007669"/>
    <property type="project" value="InterPro"/>
</dbReference>
<dbReference type="GO" id="GO:0004867">
    <property type="term" value="F:serine-type endopeptidase inhibitor activity"/>
    <property type="evidence" value="ECO:0007669"/>
    <property type="project" value="UniProtKB-KW"/>
</dbReference>
<dbReference type="GO" id="GO:0090729">
    <property type="term" value="F:toxin activity"/>
    <property type="evidence" value="ECO:0007669"/>
    <property type="project" value="UniProtKB-KW"/>
</dbReference>
<dbReference type="GO" id="GO:0002376">
    <property type="term" value="P:immune system process"/>
    <property type="evidence" value="ECO:0007669"/>
    <property type="project" value="UniProtKB-KW"/>
</dbReference>
<dbReference type="CDD" id="cd19577">
    <property type="entry name" value="serpinJ_IRS-2-like"/>
    <property type="match status" value="1"/>
</dbReference>
<dbReference type="FunFam" id="3.30.497.10:FF:000031">
    <property type="entry name" value="Putative salivary serpin"/>
    <property type="match status" value="1"/>
</dbReference>
<dbReference type="FunFam" id="2.30.39.10:FF:000083">
    <property type="entry name" value="Serpin-2 precursor, putative"/>
    <property type="match status" value="1"/>
</dbReference>
<dbReference type="Gene3D" id="2.30.39.10">
    <property type="entry name" value="Alpha-1-antitrypsin, domain 1"/>
    <property type="match status" value="1"/>
</dbReference>
<dbReference type="Gene3D" id="3.30.497.10">
    <property type="entry name" value="Antithrombin, subunit I, domain 2"/>
    <property type="match status" value="1"/>
</dbReference>
<dbReference type="InterPro" id="IPR023795">
    <property type="entry name" value="Serpin_CS"/>
</dbReference>
<dbReference type="InterPro" id="IPR023796">
    <property type="entry name" value="Serpin_dom"/>
</dbReference>
<dbReference type="InterPro" id="IPR000215">
    <property type="entry name" value="Serpin_fam"/>
</dbReference>
<dbReference type="InterPro" id="IPR036186">
    <property type="entry name" value="Serpin_sf"/>
</dbReference>
<dbReference type="InterPro" id="IPR042178">
    <property type="entry name" value="Serpin_sf_1"/>
</dbReference>
<dbReference type="InterPro" id="IPR042185">
    <property type="entry name" value="Serpin_sf_2"/>
</dbReference>
<dbReference type="PANTHER" id="PTHR11461:SF211">
    <property type="entry name" value="GH10112P-RELATED"/>
    <property type="match status" value="1"/>
</dbReference>
<dbReference type="PANTHER" id="PTHR11461">
    <property type="entry name" value="SERINE PROTEASE INHIBITOR, SERPIN"/>
    <property type="match status" value="1"/>
</dbReference>
<dbReference type="Pfam" id="PF00079">
    <property type="entry name" value="Serpin"/>
    <property type="match status" value="1"/>
</dbReference>
<dbReference type="SMART" id="SM00093">
    <property type="entry name" value="SERPIN"/>
    <property type="match status" value="1"/>
</dbReference>
<dbReference type="SUPFAM" id="SSF56574">
    <property type="entry name" value="Serpins"/>
    <property type="match status" value="1"/>
</dbReference>
<dbReference type="PROSITE" id="PS00284">
    <property type="entry name" value="SERPIN"/>
    <property type="match status" value="1"/>
</dbReference>
<sequence length="402" mass="44809">MTRLLWLFAAITASLAQDEISQDKWKLARANNYLGLNLLKQLPSNDKTNVFLSPFSVSTAMGMAYAGARGDTLEQLTLNFGYAADELNEGKVLALFKEQLQSTNDLPHDYTLNIANAAVAQEGYGILPEYTDALTSSFGAEYIEADFQKRGQEAIQKINAWVSNRTHGKVQSLFDEPPDFSTRLILLNAIYYKGTWLYEFDKTKTKPRSFYNGGVEKVQVPMMRLKSTLNHTYNAILNADLVDLPYVGNDFSMTIILPREKTGLASLKSVLTSQTLNLALQNMYPKDMKLKLPKFKLDTKYTLKPPLEAMGITKIFSADADLSGISGSRNLYVFDVLHKAVLEVNEEGSEAAAVTGFVIQLRTAAFVTPPPLPKVYVDHPFIFLIRNSKTNTIMFLGEINAL</sequence>
<keyword id="KW-0002">3D-structure</keyword>
<keyword id="KW-1203">Blood coagulation cascade inhibiting toxin</keyword>
<keyword id="KW-1216">Complement system impairing toxin</keyword>
<keyword id="KW-0325">Glycoprotein</keyword>
<keyword id="KW-1199">Hemostasis impairing toxin</keyword>
<keyword id="KW-0391">Immunity</keyword>
<keyword id="KW-0646">Protease inhibitor</keyword>
<keyword id="KW-0964">Secreted</keyword>
<keyword id="KW-0722">Serine protease inhibitor</keyword>
<keyword id="KW-0732">Signal</keyword>
<keyword id="KW-0800">Toxin</keyword>
<evidence type="ECO:0000255" key="1"/>
<evidence type="ECO:0000255" key="2">
    <source>
        <dbReference type="PROSITE-ProRule" id="PRU00498"/>
    </source>
</evidence>
<evidence type="ECO:0000269" key="3">
    <source>
    </source>
</evidence>
<evidence type="ECO:0000269" key="4">
    <source>
    </source>
</evidence>
<evidence type="ECO:0000303" key="5">
    <source>
    </source>
</evidence>
<evidence type="ECO:0000303" key="6">
    <source>
    </source>
</evidence>
<evidence type="ECO:0000305" key="7"/>
<evidence type="ECO:0000312" key="8">
    <source>
        <dbReference type="EMBL" id="ABI94058.1"/>
    </source>
</evidence>
<evidence type="ECO:0000312" key="9">
    <source>
        <dbReference type="EMBL" id="JAA72548.1"/>
    </source>
</evidence>
<evidence type="ECO:0007744" key="10">
    <source>
        <dbReference type="PDB" id="7PMU"/>
    </source>
</evidence>
<evidence type="ECO:0007829" key="11">
    <source>
        <dbReference type="PDB" id="7PMU"/>
    </source>
</evidence>
<name>IRS8_IXORI</name>
<feature type="signal peptide" evidence="1">
    <location>
        <begin position="1"/>
        <end position="16"/>
    </location>
</feature>
<feature type="chain" id="PRO_0000460272" description="Iripin-8" evidence="1">
    <location>
        <begin position="17"/>
        <end position="402"/>
    </location>
</feature>
<feature type="glycosylation site" description="N-linked (GlcNAc...) asparagine" evidence="2">
    <location>
        <position position="164"/>
    </location>
</feature>
<feature type="glycosylation site" description="N-linked (GlcNAc...) asparagine" evidence="2">
    <location>
        <position position="230"/>
    </location>
</feature>
<feature type="sequence conflict" description="In Ref. 2; JAA72548." evidence="7" ref="2">
    <original>L</original>
    <variation>F</variation>
    <location>
        <position position="52"/>
    </location>
</feature>
<feature type="sequence conflict" description="In Ref. 2; JAA72548." evidence="7" ref="2">
    <original>A</original>
    <variation>S</variation>
    <location>
        <position position="160"/>
    </location>
</feature>
<feature type="sequence conflict" description="In Ref. 2; JAA72548." evidence="7" ref="2">
    <original>P</original>
    <variation>T</variation>
    <location>
        <position position="306"/>
    </location>
</feature>
<feature type="sequence conflict" description="In Ref. 2; JAA72548." evidence="7" ref="2">
    <original>F</original>
    <variation>S</variation>
    <location>
        <position position="334"/>
    </location>
</feature>
<feature type="helix" evidence="11">
    <location>
        <begin position="22"/>
        <end position="41"/>
    </location>
</feature>
<feature type="strand" evidence="11">
    <location>
        <begin position="50"/>
        <end position="52"/>
    </location>
</feature>
<feature type="helix" evidence="11">
    <location>
        <begin position="54"/>
        <end position="65"/>
    </location>
</feature>
<feature type="helix" evidence="11">
    <location>
        <begin position="70"/>
        <end position="78"/>
    </location>
</feature>
<feature type="turn" evidence="11">
    <location>
        <begin position="79"/>
        <end position="81"/>
    </location>
</feature>
<feature type="helix" evidence="11">
    <location>
        <begin position="84"/>
        <end position="86"/>
    </location>
</feature>
<feature type="helix" evidence="11">
    <location>
        <begin position="89"/>
        <end position="104"/>
    </location>
</feature>
<feature type="strand" evidence="11">
    <location>
        <begin position="111"/>
        <end position="121"/>
    </location>
</feature>
<feature type="helix" evidence="11">
    <location>
        <begin position="128"/>
        <end position="138"/>
    </location>
</feature>
<feature type="strand" evidence="11">
    <location>
        <begin position="140"/>
        <end position="145"/>
    </location>
</feature>
<feature type="turn" evidence="11">
    <location>
        <begin position="147"/>
        <end position="149"/>
    </location>
</feature>
<feature type="helix" evidence="11">
    <location>
        <begin position="151"/>
        <end position="165"/>
    </location>
</feature>
<feature type="turn" evidence="11">
    <location>
        <begin position="166"/>
        <end position="168"/>
    </location>
</feature>
<feature type="strand" evidence="11">
    <location>
        <begin position="184"/>
        <end position="193"/>
    </location>
</feature>
<feature type="strand" evidence="11">
    <location>
        <begin position="196"/>
        <end position="198"/>
    </location>
</feature>
<feature type="helix" evidence="11">
    <location>
        <begin position="202"/>
        <end position="204"/>
    </location>
</feature>
<feature type="strand" evidence="11">
    <location>
        <begin position="206"/>
        <end position="212"/>
    </location>
</feature>
<feature type="turn" evidence="11">
    <location>
        <begin position="213"/>
        <end position="215"/>
    </location>
</feature>
<feature type="strand" evidence="11">
    <location>
        <begin position="216"/>
        <end position="234"/>
    </location>
</feature>
<feature type="turn" evidence="11">
    <location>
        <begin position="235"/>
        <end position="238"/>
    </location>
</feature>
<feature type="strand" evidence="11">
    <location>
        <begin position="239"/>
        <end position="246"/>
    </location>
</feature>
<feature type="helix" evidence="11">
    <location>
        <begin position="247"/>
        <end position="249"/>
    </location>
</feature>
<feature type="strand" evidence="11">
    <location>
        <begin position="250"/>
        <end position="260"/>
    </location>
</feature>
<feature type="helix" evidence="11">
    <location>
        <begin position="264"/>
        <end position="270"/>
    </location>
</feature>
<feature type="helix" evidence="11">
    <location>
        <begin position="273"/>
        <end position="280"/>
    </location>
</feature>
<feature type="strand" evidence="11">
    <location>
        <begin position="284"/>
        <end position="293"/>
    </location>
</feature>
<feature type="strand" evidence="11">
    <location>
        <begin position="295"/>
        <end position="302"/>
    </location>
</feature>
<feature type="helix" evidence="11">
    <location>
        <begin position="304"/>
        <end position="309"/>
    </location>
</feature>
<feature type="helix" evidence="11">
    <location>
        <begin position="314"/>
        <end position="316"/>
    </location>
</feature>
<feature type="helix" evidence="11">
    <location>
        <begin position="323"/>
        <end position="326"/>
    </location>
</feature>
<feature type="strand" evidence="11">
    <location>
        <begin position="327"/>
        <end position="329"/>
    </location>
</feature>
<feature type="strand" evidence="11">
    <location>
        <begin position="333"/>
        <end position="344"/>
    </location>
</feature>
<feature type="strand" evidence="11">
    <location>
        <begin position="348"/>
        <end position="350"/>
    </location>
</feature>
<feature type="strand" evidence="11">
    <location>
        <begin position="374"/>
        <end position="376"/>
    </location>
</feature>
<feature type="strand" evidence="11">
    <location>
        <begin position="381"/>
        <end position="387"/>
    </location>
</feature>
<feature type="turn" evidence="11">
    <location>
        <begin position="388"/>
        <end position="390"/>
    </location>
</feature>
<feature type="strand" evidence="11">
    <location>
        <begin position="393"/>
        <end position="399"/>
    </location>
</feature>
<accession>Q06B72</accession>
<accession>A0A0K8RNR1</accession>
<comment type="function">
    <text evidence="4">Serine protease inhibitor that modulates blood feeding of ticks on vertebrate species (PubMed:34502392). Inhibits the intrinsic and common pathways of blood coagulation in the host (PubMed:34502392). Inhibits host thrombin, factor VIIa, factor Xa, factor XIa, factor XIIa, plasmin and activated protein C (PubMed:34502392). Inhibits host trypsin and kallikrein (PubMed:34502392). Reduces host complement activity (PubMed:34502392). Does not affect proliferation of CD4+ T-cells and neutrophil migration (PubMed:34502392).</text>
</comment>
<comment type="subunit">
    <text evidence="4">Interacts with host thrombin/F2 (PubMed:34502392). Interacts with host coagulation factor VII/F7 (activated) (PubMed:34502392). Interacts with host coagulation factor X/F10 (activated) (PubMed:34502392). Interacts with host coagulation factor XII/F12 (activated) (PubMed:34502392). Interacts with host coagulation factor IX/F9 (activated) (PubMed:34502392). Interacts with host plasmin/PLG (PubMed:34502392). Interacts with host protein C/PROC (activated) (PubMed:34502392).</text>
</comment>
<comment type="subcellular location">
    <subcellularLocation>
        <location evidence="4">Secreted</location>
    </subcellularLocation>
</comment>
<comment type="tissue specificity">
    <text evidence="3 4">Saliva (at protein level) (PubMed:34502392). Salivary gland (PubMed:20940421, PubMed:34502392). Midgut (PubMed:34502392). Low-level expression in ovary (PubMed:34502392).</text>
</comment>
<comment type="developmental stage">
    <text evidence="4">Highly expressed in nymphs with a peak during the first day of blood feeding.</text>
</comment>
<comment type="induction">
    <text evidence="4">Induced by blood feeding.</text>
</comment>
<comment type="domain">
    <text evidence="4">Has an unusually long reactive center loop.</text>
</comment>
<comment type="disruption phenotype">
    <text evidence="4">RNAi-mediated knockdown results in reduced feeding success rate in nymphs (PubMed:34502392). Longer feeding time (PubMed:34502392). Higher mortality in nymphs (PubMed:34502392). No significant effect on Borrelia afzelii transmission from infected nymphs to mice (PubMed:34502392).</text>
</comment>
<comment type="similarity">
    <text evidence="7">Belongs to the serpin family.</text>
</comment>
<comment type="sequence caution" evidence="7">
    <conflict type="erroneous initiation">
        <sequence resource="EMBL-CDS" id="JAA72548"/>
    </conflict>
    <text>Extended N-terminus.</text>
</comment>